<accession>B7M5F7</accession>
<organism>
    <name type="scientific">Escherichia coli O8 (strain IAI1)</name>
    <dbReference type="NCBI Taxonomy" id="585034"/>
    <lineage>
        <taxon>Bacteria</taxon>
        <taxon>Pseudomonadati</taxon>
        <taxon>Pseudomonadota</taxon>
        <taxon>Gammaproteobacteria</taxon>
        <taxon>Enterobacterales</taxon>
        <taxon>Enterobacteriaceae</taxon>
        <taxon>Escherichia</taxon>
    </lineage>
</organism>
<keyword id="KW-0012">Acyltransferase</keyword>
<keyword id="KW-0963">Cytoplasm</keyword>
<keyword id="KW-0808">Transferase</keyword>
<dbReference type="EC" id="2.3.1.181" evidence="1"/>
<dbReference type="EMBL" id="CU928160">
    <property type="protein sequence ID" value="CAQ97483.1"/>
    <property type="molecule type" value="Genomic_DNA"/>
</dbReference>
<dbReference type="RefSeq" id="WP_000284027.1">
    <property type="nucleotide sequence ID" value="NC_011741.1"/>
</dbReference>
<dbReference type="SMR" id="B7M5F7"/>
<dbReference type="GeneID" id="93776852"/>
<dbReference type="KEGG" id="ecr:ECIAI1_0613"/>
<dbReference type="HOGENOM" id="CLU_035168_3_1_6"/>
<dbReference type="UniPathway" id="UPA00538">
    <property type="reaction ID" value="UER00592"/>
</dbReference>
<dbReference type="GO" id="GO:0005737">
    <property type="term" value="C:cytoplasm"/>
    <property type="evidence" value="ECO:0007669"/>
    <property type="project" value="UniProtKB-SubCell"/>
</dbReference>
<dbReference type="GO" id="GO:0033819">
    <property type="term" value="F:lipoyl(octanoyl) transferase activity"/>
    <property type="evidence" value="ECO:0007669"/>
    <property type="project" value="UniProtKB-EC"/>
</dbReference>
<dbReference type="GO" id="GO:0036211">
    <property type="term" value="P:protein modification process"/>
    <property type="evidence" value="ECO:0007669"/>
    <property type="project" value="InterPro"/>
</dbReference>
<dbReference type="CDD" id="cd16444">
    <property type="entry name" value="LipB"/>
    <property type="match status" value="1"/>
</dbReference>
<dbReference type="FunFam" id="3.30.930.10:FF:000020">
    <property type="entry name" value="Octanoyltransferase"/>
    <property type="match status" value="1"/>
</dbReference>
<dbReference type="Gene3D" id="3.30.930.10">
    <property type="entry name" value="Bira Bifunctional Protein, Domain 2"/>
    <property type="match status" value="1"/>
</dbReference>
<dbReference type="HAMAP" id="MF_00013">
    <property type="entry name" value="LipB"/>
    <property type="match status" value="1"/>
</dbReference>
<dbReference type="InterPro" id="IPR045864">
    <property type="entry name" value="aa-tRNA-synth_II/BPL/LPL"/>
</dbReference>
<dbReference type="InterPro" id="IPR004143">
    <property type="entry name" value="BPL_LPL_catalytic"/>
</dbReference>
<dbReference type="InterPro" id="IPR000544">
    <property type="entry name" value="Octanoyltransferase"/>
</dbReference>
<dbReference type="InterPro" id="IPR020605">
    <property type="entry name" value="Octanoyltransferase_CS"/>
</dbReference>
<dbReference type="NCBIfam" id="TIGR00214">
    <property type="entry name" value="lipB"/>
    <property type="match status" value="1"/>
</dbReference>
<dbReference type="NCBIfam" id="NF010922">
    <property type="entry name" value="PRK14342.1"/>
    <property type="match status" value="1"/>
</dbReference>
<dbReference type="PANTHER" id="PTHR10993:SF7">
    <property type="entry name" value="LIPOYLTRANSFERASE 2, MITOCHONDRIAL-RELATED"/>
    <property type="match status" value="1"/>
</dbReference>
<dbReference type="PANTHER" id="PTHR10993">
    <property type="entry name" value="OCTANOYLTRANSFERASE"/>
    <property type="match status" value="1"/>
</dbReference>
<dbReference type="Pfam" id="PF21948">
    <property type="entry name" value="LplA-B_cat"/>
    <property type="match status" value="1"/>
</dbReference>
<dbReference type="PIRSF" id="PIRSF016262">
    <property type="entry name" value="LPLase"/>
    <property type="match status" value="1"/>
</dbReference>
<dbReference type="SUPFAM" id="SSF55681">
    <property type="entry name" value="Class II aaRS and biotin synthetases"/>
    <property type="match status" value="1"/>
</dbReference>
<dbReference type="PROSITE" id="PS51733">
    <property type="entry name" value="BPL_LPL_CATALYTIC"/>
    <property type="match status" value="1"/>
</dbReference>
<dbReference type="PROSITE" id="PS01313">
    <property type="entry name" value="LIPB"/>
    <property type="match status" value="1"/>
</dbReference>
<protein>
    <recommendedName>
        <fullName evidence="1">Octanoyltransferase</fullName>
        <ecNumber evidence="1">2.3.1.181</ecNumber>
    </recommendedName>
    <alternativeName>
        <fullName evidence="1">Lipoate-protein ligase B</fullName>
    </alternativeName>
    <alternativeName>
        <fullName evidence="1">Lipoyl/octanoyl transferase</fullName>
    </alternativeName>
    <alternativeName>
        <fullName evidence="1">Octanoyl-[acyl-carrier-protein]-protein N-octanoyltransferase</fullName>
    </alternativeName>
</protein>
<gene>
    <name evidence="1" type="primary">lipB</name>
    <name type="ordered locus">ECIAI1_0613</name>
</gene>
<evidence type="ECO:0000255" key="1">
    <source>
        <dbReference type="HAMAP-Rule" id="MF_00013"/>
    </source>
</evidence>
<evidence type="ECO:0000255" key="2">
    <source>
        <dbReference type="PROSITE-ProRule" id="PRU01067"/>
    </source>
</evidence>
<feature type="chain" id="PRO_1000116282" description="Octanoyltransferase">
    <location>
        <begin position="1"/>
        <end position="213"/>
    </location>
</feature>
<feature type="domain" description="BPL/LPL catalytic" evidence="2">
    <location>
        <begin position="32"/>
        <end position="207"/>
    </location>
</feature>
<feature type="active site" description="Acyl-thioester intermediate" evidence="1">
    <location>
        <position position="169"/>
    </location>
</feature>
<feature type="binding site" evidence="1">
    <location>
        <begin position="71"/>
        <end position="78"/>
    </location>
    <ligand>
        <name>substrate</name>
    </ligand>
</feature>
<feature type="binding site" evidence="1">
    <location>
        <begin position="138"/>
        <end position="140"/>
    </location>
    <ligand>
        <name>substrate</name>
    </ligand>
</feature>
<feature type="binding site" evidence="1">
    <location>
        <begin position="151"/>
        <end position="153"/>
    </location>
    <ligand>
        <name>substrate</name>
    </ligand>
</feature>
<feature type="site" description="Lowers pKa of active site Cys" evidence="1">
    <location>
        <position position="135"/>
    </location>
</feature>
<name>LIPB_ECO8A</name>
<proteinExistence type="inferred from homology"/>
<comment type="function">
    <text evidence="1">Catalyzes the transfer of endogenously produced octanoic acid from octanoyl-acyl-carrier-protein onto the lipoyl domains of lipoate-dependent enzymes. Lipoyl-ACP can also act as a substrate although octanoyl-ACP is likely to be the physiological substrate.</text>
</comment>
<comment type="catalytic activity">
    <reaction evidence="1">
        <text>octanoyl-[ACP] + L-lysyl-[protein] = N(6)-octanoyl-L-lysyl-[protein] + holo-[ACP] + H(+)</text>
        <dbReference type="Rhea" id="RHEA:17665"/>
        <dbReference type="Rhea" id="RHEA-COMP:9636"/>
        <dbReference type="Rhea" id="RHEA-COMP:9685"/>
        <dbReference type="Rhea" id="RHEA-COMP:9752"/>
        <dbReference type="Rhea" id="RHEA-COMP:9928"/>
        <dbReference type="ChEBI" id="CHEBI:15378"/>
        <dbReference type="ChEBI" id="CHEBI:29969"/>
        <dbReference type="ChEBI" id="CHEBI:64479"/>
        <dbReference type="ChEBI" id="CHEBI:78463"/>
        <dbReference type="ChEBI" id="CHEBI:78809"/>
        <dbReference type="EC" id="2.3.1.181"/>
    </reaction>
</comment>
<comment type="pathway">
    <text evidence="1">Protein modification; protein lipoylation via endogenous pathway; protein N(6)-(lipoyl)lysine from octanoyl-[acyl-carrier-protein]: step 1/2.</text>
</comment>
<comment type="subcellular location">
    <subcellularLocation>
        <location evidence="1">Cytoplasm</location>
    </subcellularLocation>
</comment>
<comment type="miscellaneous">
    <text evidence="1">In the reaction, the free carboxyl group of octanoic acid is attached via an amide linkage to the epsilon-amino group of a specific lysine residue of lipoyl domains of lipoate-dependent enzymes.</text>
</comment>
<comment type="similarity">
    <text evidence="1">Belongs to the LipB family.</text>
</comment>
<sequence>MYQDKILVRQLGLQPYEPISQAMHEFTDTRDDSTLDEIWLVEHYPVFTQGQAGKAEHILMPGDIPVIQSDRGGQVTYHGPGQQVMYVLLNLKRRKLGVRELVTLLEQTVVNTLAELGIEAHPRADAPGVYVGEKKICSLGLRIRRGCSFHGLALNVNMDLSPFLRINPCGYAGMEMAKISQWKPEATTNNIAPRLLENILALLNNPDFEYITA</sequence>
<reference key="1">
    <citation type="journal article" date="2009" name="PLoS Genet.">
        <title>Organised genome dynamics in the Escherichia coli species results in highly diverse adaptive paths.</title>
        <authorList>
            <person name="Touchon M."/>
            <person name="Hoede C."/>
            <person name="Tenaillon O."/>
            <person name="Barbe V."/>
            <person name="Baeriswyl S."/>
            <person name="Bidet P."/>
            <person name="Bingen E."/>
            <person name="Bonacorsi S."/>
            <person name="Bouchier C."/>
            <person name="Bouvet O."/>
            <person name="Calteau A."/>
            <person name="Chiapello H."/>
            <person name="Clermont O."/>
            <person name="Cruveiller S."/>
            <person name="Danchin A."/>
            <person name="Diard M."/>
            <person name="Dossat C."/>
            <person name="Karoui M.E."/>
            <person name="Frapy E."/>
            <person name="Garry L."/>
            <person name="Ghigo J.M."/>
            <person name="Gilles A.M."/>
            <person name="Johnson J."/>
            <person name="Le Bouguenec C."/>
            <person name="Lescat M."/>
            <person name="Mangenot S."/>
            <person name="Martinez-Jehanne V."/>
            <person name="Matic I."/>
            <person name="Nassif X."/>
            <person name="Oztas S."/>
            <person name="Petit M.A."/>
            <person name="Pichon C."/>
            <person name="Rouy Z."/>
            <person name="Ruf C.S."/>
            <person name="Schneider D."/>
            <person name="Tourret J."/>
            <person name="Vacherie B."/>
            <person name="Vallenet D."/>
            <person name="Medigue C."/>
            <person name="Rocha E.P.C."/>
            <person name="Denamur E."/>
        </authorList>
    </citation>
    <scope>NUCLEOTIDE SEQUENCE [LARGE SCALE GENOMIC DNA]</scope>
    <source>
        <strain>IAI1</strain>
    </source>
</reference>